<gene>
    <name type="ordered locus">Krad_3057</name>
</gene>
<name>Y3057_KINRD</name>
<proteinExistence type="inferred from homology"/>
<feature type="chain" id="PRO_1000083159" description="Probable transcriptional regulatory protein Krad_3057">
    <location>
        <begin position="1"/>
        <end position="253"/>
    </location>
</feature>
<protein>
    <recommendedName>
        <fullName evidence="1">Probable transcriptional regulatory protein Krad_3057</fullName>
    </recommendedName>
</protein>
<evidence type="ECO:0000255" key="1">
    <source>
        <dbReference type="HAMAP-Rule" id="MF_00693"/>
    </source>
</evidence>
<accession>A6WCI2</accession>
<dbReference type="EMBL" id="CP000750">
    <property type="protein sequence ID" value="ABS04521.1"/>
    <property type="molecule type" value="Genomic_DNA"/>
</dbReference>
<dbReference type="RefSeq" id="WP_012087228.1">
    <property type="nucleotide sequence ID" value="NC_009664.2"/>
</dbReference>
<dbReference type="SMR" id="A6WCI2"/>
<dbReference type="STRING" id="266940.Krad_3057"/>
<dbReference type="KEGG" id="kra:Krad_3057"/>
<dbReference type="eggNOG" id="COG0217">
    <property type="taxonomic scope" value="Bacteria"/>
</dbReference>
<dbReference type="HOGENOM" id="CLU_062974_2_2_11"/>
<dbReference type="OrthoDB" id="9781053at2"/>
<dbReference type="Proteomes" id="UP000001116">
    <property type="component" value="Chromosome"/>
</dbReference>
<dbReference type="GO" id="GO:0005829">
    <property type="term" value="C:cytosol"/>
    <property type="evidence" value="ECO:0007669"/>
    <property type="project" value="TreeGrafter"/>
</dbReference>
<dbReference type="GO" id="GO:0003677">
    <property type="term" value="F:DNA binding"/>
    <property type="evidence" value="ECO:0007669"/>
    <property type="project" value="UniProtKB-UniRule"/>
</dbReference>
<dbReference type="GO" id="GO:0006355">
    <property type="term" value="P:regulation of DNA-templated transcription"/>
    <property type="evidence" value="ECO:0007669"/>
    <property type="project" value="UniProtKB-UniRule"/>
</dbReference>
<dbReference type="FunFam" id="1.10.10.200:FF:000002">
    <property type="entry name" value="Probable transcriptional regulatory protein CLM62_37755"/>
    <property type="match status" value="1"/>
</dbReference>
<dbReference type="Gene3D" id="1.10.10.200">
    <property type="match status" value="1"/>
</dbReference>
<dbReference type="Gene3D" id="3.30.70.980">
    <property type="match status" value="2"/>
</dbReference>
<dbReference type="HAMAP" id="MF_00693">
    <property type="entry name" value="Transcrip_reg_TACO1"/>
    <property type="match status" value="1"/>
</dbReference>
<dbReference type="InterPro" id="IPR017856">
    <property type="entry name" value="Integrase-like_N"/>
</dbReference>
<dbReference type="InterPro" id="IPR048300">
    <property type="entry name" value="TACO1_YebC-like_2nd/3rd_dom"/>
</dbReference>
<dbReference type="InterPro" id="IPR049083">
    <property type="entry name" value="TACO1_YebC_N"/>
</dbReference>
<dbReference type="InterPro" id="IPR002876">
    <property type="entry name" value="Transcrip_reg_TACO1-like"/>
</dbReference>
<dbReference type="InterPro" id="IPR026564">
    <property type="entry name" value="Transcrip_reg_TACO1-like_dom3"/>
</dbReference>
<dbReference type="InterPro" id="IPR029072">
    <property type="entry name" value="YebC-like"/>
</dbReference>
<dbReference type="NCBIfam" id="NF001030">
    <property type="entry name" value="PRK00110.1"/>
    <property type="match status" value="1"/>
</dbReference>
<dbReference type="NCBIfam" id="NF009044">
    <property type="entry name" value="PRK12378.1"/>
    <property type="match status" value="1"/>
</dbReference>
<dbReference type="NCBIfam" id="TIGR01033">
    <property type="entry name" value="YebC/PmpR family DNA-binding transcriptional regulator"/>
    <property type="match status" value="1"/>
</dbReference>
<dbReference type="PANTHER" id="PTHR12532:SF6">
    <property type="entry name" value="TRANSCRIPTIONAL REGULATORY PROTEIN YEBC-RELATED"/>
    <property type="match status" value="1"/>
</dbReference>
<dbReference type="PANTHER" id="PTHR12532">
    <property type="entry name" value="TRANSLATIONAL ACTIVATOR OF CYTOCHROME C OXIDASE 1"/>
    <property type="match status" value="1"/>
</dbReference>
<dbReference type="Pfam" id="PF20772">
    <property type="entry name" value="TACO1_YebC_N"/>
    <property type="match status" value="1"/>
</dbReference>
<dbReference type="Pfam" id="PF01709">
    <property type="entry name" value="Transcrip_reg"/>
    <property type="match status" value="1"/>
</dbReference>
<dbReference type="SUPFAM" id="SSF75625">
    <property type="entry name" value="YebC-like"/>
    <property type="match status" value="1"/>
</dbReference>
<sequence length="253" mass="26597">MSGHSKWATTKHKKAVVDAKRAKSFARLIKNIEVAARTGGGDVSGNPTLFDAIQKAKKTSVPADNIDRAVKRGSGAEAGGADWQTIMYEGYGPNGVALLVECLTDNKNRAAMEVRTAMTRNGGSLADPGSVAYMFSRKGVVVIGKEGTDLTEDDVLGAVLDAGAEEVSDQGDTFEVISEATDLAAVRDALKAAGIEYDSAEASFVPSVEVPLDAEGATKVFRLIDALDDCDDVQNVFANYDVSDDVMAALEDA</sequence>
<comment type="subcellular location">
    <subcellularLocation>
        <location evidence="1">Cytoplasm</location>
    </subcellularLocation>
</comment>
<comment type="similarity">
    <text evidence="1">Belongs to the TACO1 family.</text>
</comment>
<reference key="1">
    <citation type="journal article" date="2008" name="PLoS ONE">
        <title>Survival in nuclear waste, extreme resistance, and potential applications gleaned from the genome sequence of Kineococcus radiotolerans SRS30216.</title>
        <authorList>
            <person name="Bagwell C.E."/>
            <person name="Bhat S."/>
            <person name="Hawkins G.M."/>
            <person name="Smith B.W."/>
            <person name="Biswas T."/>
            <person name="Hoover T.R."/>
            <person name="Saunders E."/>
            <person name="Han C.S."/>
            <person name="Tsodikov O.V."/>
            <person name="Shimkets L.J."/>
        </authorList>
    </citation>
    <scope>NUCLEOTIDE SEQUENCE [LARGE SCALE GENOMIC DNA]</scope>
    <source>
        <strain>ATCC BAA-149 / DSM 14245 / SRS30216</strain>
    </source>
</reference>
<organism>
    <name type="scientific">Kineococcus radiotolerans (strain ATCC BAA-149 / DSM 14245 / SRS30216)</name>
    <dbReference type="NCBI Taxonomy" id="266940"/>
    <lineage>
        <taxon>Bacteria</taxon>
        <taxon>Bacillati</taxon>
        <taxon>Actinomycetota</taxon>
        <taxon>Actinomycetes</taxon>
        <taxon>Kineosporiales</taxon>
        <taxon>Kineosporiaceae</taxon>
        <taxon>Kineococcus</taxon>
    </lineage>
</organism>
<keyword id="KW-0963">Cytoplasm</keyword>
<keyword id="KW-0238">DNA-binding</keyword>
<keyword id="KW-1185">Reference proteome</keyword>
<keyword id="KW-0804">Transcription</keyword>
<keyword id="KW-0805">Transcription regulation</keyword>